<evidence type="ECO:0000250" key="1">
    <source>
        <dbReference type="UniProtKB" id="P33759"/>
    </source>
</evidence>
<evidence type="ECO:0000255" key="2"/>
<evidence type="ECO:0000255" key="3">
    <source>
        <dbReference type="PROSITE-ProRule" id="PRU00268"/>
    </source>
</evidence>
<evidence type="ECO:0000256" key="4">
    <source>
        <dbReference type="SAM" id="MobiDB-lite"/>
    </source>
</evidence>
<evidence type="ECO:0000269" key="5">
    <source>
    </source>
</evidence>
<evidence type="ECO:0000269" key="6">
    <source>
    </source>
</evidence>
<evidence type="ECO:0000305" key="7"/>
<protein>
    <recommendedName>
        <fullName evidence="7">Small ribosomal subunit protein uS5m</fullName>
    </recommendedName>
    <alternativeName>
        <fullName>37S ribosomal protein S5, mitochondrial</fullName>
    </alternativeName>
</protein>
<keyword id="KW-0496">Mitochondrion</keyword>
<keyword id="KW-0597">Phosphoprotein</keyword>
<keyword id="KW-1185">Reference proteome</keyword>
<keyword id="KW-0687">Ribonucleoprotein</keyword>
<keyword id="KW-0689">Ribosomal protein</keyword>
<keyword id="KW-0809">Transit peptide</keyword>
<comment type="function">
    <text evidence="1">Component of the mitochondrial ribosome (mitoribosome), a dedicated translation machinery responsible for the synthesis of mitochondrial genome-encoded proteins, including at least some of the essential transmembrane subunits of the mitochondrial respiratory chain. The mitoribosomes are attached to the mitochondrial inner membrane and translation products are cotranslationally integrated into the membrane.</text>
</comment>
<comment type="subunit">
    <text evidence="1">Component of the mitochondrial small ribosomal subunit (mt-SSU). Mature yeast 74S mitochondrial ribosomes consist of a small (37S) and a large (54S) subunit. The 37S small subunit contains a 15S ribosomal RNA (15S mt-rRNA) and at least 32 different proteins. The 54S large subunit contains a 21S rRNA (21S mt-rRNA) and at least 45 different proteins. uS3m, uS4m and uS5m form the narrow entry site of the mRNA channel.</text>
</comment>
<comment type="subcellular location">
    <subcellularLocation>
        <location evidence="5">Mitochondrion</location>
    </subcellularLocation>
</comment>
<comment type="similarity">
    <text evidence="7">Belongs to the universal ribosomal protein uS5 family.</text>
</comment>
<sequence>MLRSFSHFLQIGSRRQPTYFRCFHKTTVHLNSFKNDPKKELNSNLNEKSVEESSKNETKEQFNSSSIPRESESEGKTASNTSPLSPKKVENLSKLFNDINEDVSIEELKSRFKDHLPFYENYIRNHPLAIEALQKSTAPRQTGLKLNYVSKLDKYVTPLDGYSHLGSEESNGEIPDKWEDFKDDLTFEISSKFSPFDFGDAGKSTSDAEFLSDISGIPKSDLRALMFVPLVRRRVVNQTRKGKIASMYVLTVVGNRNGVAGFGEGKAESYSLAYKQSCGRAVKNMVYIPRYDKRTVYGVIHKKFHAVRLTLRSRPAGFGLRCNPILHEICRCAGIKDISGEILGSKNGMNTVKAMFEALQSQRLPEDIAMERGQKFVDVQREYYKQT</sequence>
<gene>
    <name type="primary">mrp5</name>
    <name type="synonym">mrps5</name>
    <name type="ORF">SPAC4G9.17c</name>
</gene>
<accession>Q10234</accession>
<dbReference type="EMBL" id="CU329670">
    <property type="protein sequence ID" value="CAA93567.1"/>
    <property type="molecule type" value="Genomic_DNA"/>
</dbReference>
<dbReference type="PIR" id="T38876">
    <property type="entry name" value="T38876"/>
</dbReference>
<dbReference type="RefSeq" id="NP_593699.1">
    <property type="nucleotide sequence ID" value="NM_001019131.2"/>
</dbReference>
<dbReference type="SMR" id="Q10234"/>
<dbReference type="BioGRID" id="279922">
    <property type="interactions" value="3"/>
</dbReference>
<dbReference type="ComplexPortal" id="CPX-10315">
    <property type="entry name" value="37S mitochondrial small ribosomal subunit"/>
</dbReference>
<dbReference type="FunCoup" id="Q10234">
    <property type="interactions" value="215"/>
</dbReference>
<dbReference type="STRING" id="284812.Q10234"/>
<dbReference type="iPTMnet" id="Q10234"/>
<dbReference type="PaxDb" id="4896-SPAC4G9.17c.1"/>
<dbReference type="EnsemblFungi" id="SPAC4G9.17c.1">
    <property type="protein sequence ID" value="SPAC4G9.17c.1:pep"/>
    <property type="gene ID" value="SPAC4G9.17c"/>
</dbReference>
<dbReference type="GeneID" id="2543504"/>
<dbReference type="KEGG" id="spo:2543504"/>
<dbReference type="PomBase" id="SPAC4G9.17c">
    <property type="gene designation" value="mrp5"/>
</dbReference>
<dbReference type="VEuPathDB" id="FungiDB:SPAC4G9.17c"/>
<dbReference type="eggNOG" id="KOG2646">
    <property type="taxonomic scope" value="Eukaryota"/>
</dbReference>
<dbReference type="HOGENOM" id="CLU_037994_1_0_1"/>
<dbReference type="InParanoid" id="Q10234"/>
<dbReference type="OMA" id="GSKNGMN"/>
<dbReference type="PhylomeDB" id="Q10234"/>
<dbReference type="PRO" id="PR:Q10234"/>
<dbReference type="Proteomes" id="UP000002485">
    <property type="component" value="Chromosome I"/>
</dbReference>
<dbReference type="GO" id="GO:0005763">
    <property type="term" value="C:mitochondrial small ribosomal subunit"/>
    <property type="evidence" value="ECO:0000318"/>
    <property type="project" value="GO_Central"/>
</dbReference>
<dbReference type="GO" id="GO:0005739">
    <property type="term" value="C:mitochondrion"/>
    <property type="evidence" value="ECO:0007005"/>
    <property type="project" value="PomBase"/>
</dbReference>
<dbReference type="GO" id="GO:0003723">
    <property type="term" value="F:RNA binding"/>
    <property type="evidence" value="ECO:0007669"/>
    <property type="project" value="InterPro"/>
</dbReference>
<dbReference type="GO" id="GO:0003735">
    <property type="term" value="F:structural constituent of ribosome"/>
    <property type="evidence" value="ECO:0000318"/>
    <property type="project" value="GO_Central"/>
</dbReference>
<dbReference type="GO" id="GO:0032543">
    <property type="term" value="P:mitochondrial translation"/>
    <property type="evidence" value="ECO:0000250"/>
    <property type="project" value="PomBase"/>
</dbReference>
<dbReference type="GO" id="GO:0006412">
    <property type="term" value="P:translation"/>
    <property type="evidence" value="ECO:0000318"/>
    <property type="project" value="GO_Central"/>
</dbReference>
<dbReference type="FunFam" id="3.30.160.20:FF:000022">
    <property type="entry name" value="28S ribosomal protein S5, mitochondrial"/>
    <property type="match status" value="1"/>
</dbReference>
<dbReference type="FunFam" id="3.30.230.10:FF:000041">
    <property type="entry name" value="37S ribosomal protein S5"/>
    <property type="match status" value="1"/>
</dbReference>
<dbReference type="Gene3D" id="3.30.160.20">
    <property type="match status" value="1"/>
</dbReference>
<dbReference type="Gene3D" id="3.30.230.10">
    <property type="match status" value="1"/>
</dbReference>
<dbReference type="InterPro" id="IPR020568">
    <property type="entry name" value="Ribosomal_Su5_D2-typ_SF"/>
</dbReference>
<dbReference type="InterPro" id="IPR000851">
    <property type="entry name" value="Ribosomal_uS5"/>
</dbReference>
<dbReference type="InterPro" id="IPR005324">
    <property type="entry name" value="Ribosomal_uS5_C"/>
</dbReference>
<dbReference type="InterPro" id="IPR013810">
    <property type="entry name" value="Ribosomal_uS5_N"/>
</dbReference>
<dbReference type="InterPro" id="IPR018192">
    <property type="entry name" value="Ribosomal_uS5_N_CS"/>
</dbReference>
<dbReference type="InterPro" id="IPR014721">
    <property type="entry name" value="Ribsml_uS5_D2-typ_fold_subgr"/>
</dbReference>
<dbReference type="PANTHER" id="PTHR48277">
    <property type="entry name" value="MITOCHONDRIAL RIBOSOMAL PROTEIN S5"/>
    <property type="match status" value="1"/>
</dbReference>
<dbReference type="PANTHER" id="PTHR48277:SF1">
    <property type="entry name" value="MITOCHONDRIAL RIBOSOMAL PROTEIN S5"/>
    <property type="match status" value="1"/>
</dbReference>
<dbReference type="Pfam" id="PF00333">
    <property type="entry name" value="Ribosomal_S5"/>
    <property type="match status" value="1"/>
</dbReference>
<dbReference type="Pfam" id="PF03719">
    <property type="entry name" value="Ribosomal_S5_C"/>
    <property type="match status" value="1"/>
</dbReference>
<dbReference type="SUPFAM" id="SSF54768">
    <property type="entry name" value="dsRNA-binding domain-like"/>
    <property type="match status" value="1"/>
</dbReference>
<dbReference type="SUPFAM" id="SSF54211">
    <property type="entry name" value="Ribosomal protein S5 domain 2-like"/>
    <property type="match status" value="1"/>
</dbReference>
<dbReference type="PROSITE" id="PS00585">
    <property type="entry name" value="RIBOSOMAL_S5"/>
    <property type="match status" value="1"/>
</dbReference>
<dbReference type="PROSITE" id="PS50881">
    <property type="entry name" value="S5_DSRBD"/>
    <property type="match status" value="1"/>
</dbReference>
<feature type="transit peptide" description="Mitochondrion" evidence="2">
    <location>
        <begin position="1"/>
        <end position="22"/>
    </location>
</feature>
<feature type="chain" id="PRO_0000131687" description="Small ribosomal subunit protein uS5m">
    <location>
        <begin position="23"/>
        <end position="387"/>
    </location>
</feature>
<feature type="domain" description="S5 DRBM" evidence="3">
    <location>
        <begin position="225"/>
        <end position="288"/>
    </location>
</feature>
<feature type="region of interest" description="Disordered" evidence="4">
    <location>
        <begin position="33"/>
        <end position="87"/>
    </location>
</feature>
<feature type="compositionally biased region" description="Basic and acidic residues" evidence="4">
    <location>
        <begin position="48"/>
        <end position="60"/>
    </location>
</feature>
<feature type="modified residue" description="Phosphoserine" evidence="6">
    <location>
        <position position="85"/>
    </location>
</feature>
<name>RT05_SCHPO</name>
<proteinExistence type="evidence at protein level"/>
<organism>
    <name type="scientific">Schizosaccharomyces pombe (strain 972 / ATCC 24843)</name>
    <name type="common">Fission yeast</name>
    <dbReference type="NCBI Taxonomy" id="284812"/>
    <lineage>
        <taxon>Eukaryota</taxon>
        <taxon>Fungi</taxon>
        <taxon>Dikarya</taxon>
        <taxon>Ascomycota</taxon>
        <taxon>Taphrinomycotina</taxon>
        <taxon>Schizosaccharomycetes</taxon>
        <taxon>Schizosaccharomycetales</taxon>
        <taxon>Schizosaccharomycetaceae</taxon>
        <taxon>Schizosaccharomyces</taxon>
    </lineage>
</organism>
<reference key="1">
    <citation type="journal article" date="2002" name="Nature">
        <title>The genome sequence of Schizosaccharomyces pombe.</title>
        <authorList>
            <person name="Wood V."/>
            <person name="Gwilliam R."/>
            <person name="Rajandream M.A."/>
            <person name="Lyne M.H."/>
            <person name="Lyne R."/>
            <person name="Stewart A."/>
            <person name="Sgouros J.G."/>
            <person name="Peat N."/>
            <person name="Hayles J."/>
            <person name="Baker S.G."/>
            <person name="Basham D."/>
            <person name="Bowman S."/>
            <person name="Brooks K."/>
            <person name="Brown D."/>
            <person name="Brown S."/>
            <person name="Chillingworth T."/>
            <person name="Churcher C.M."/>
            <person name="Collins M."/>
            <person name="Connor R."/>
            <person name="Cronin A."/>
            <person name="Davis P."/>
            <person name="Feltwell T."/>
            <person name="Fraser A."/>
            <person name="Gentles S."/>
            <person name="Goble A."/>
            <person name="Hamlin N."/>
            <person name="Harris D.E."/>
            <person name="Hidalgo J."/>
            <person name="Hodgson G."/>
            <person name="Holroyd S."/>
            <person name="Hornsby T."/>
            <person name="Howarth S."/>
            <person name="Huckle E.J."/>
            <person name="Hunt S."/>
            <person name="Jagels K."/>
            <person name="James K.D."/>
            <person name="Jones L."/>
            <person name="Jones M."/>
            <person name="Leather S."/>
            <person name="McDonald S."/>
            <person name="McLean J."/>
            <person name="Mooney P."/>
            <person name="Moule S."/>
            <person name="Mungall K.L."/>
            <person name="Murphy L.D."/>
            <person name="Niblett D."/>
            <person name="Odell C."/>
            <person name="Oliver K."/>
            <person name="O'Neil S."/>
            <person name="Pearson D."/>
            <person name="Quail M.A."/>
            <person name="Rabbinowitsch E."/>
            <person name="Rutherford K.M."/>
            <person name="Rutter S."/>
            <person name="Saunders D."/>
            <person name="Seeger K."/>
            <person name="Sharp S."/>
            <person name="Skelton J."/>
            <person name="Simmonds M.N."/>
            <person name="Squares R."/>
            <person name="Squares S."/>
            <person name="Stevens K."/>
            <person name="Taylor K."/>
            <person name="Taylor R.G."/>
            <person name="Tivey A."/>
            <person name="Walsh S.V."/>
            <person name="Warren T."/>
            <person name="Whitehead S."/>
            <person name="Woodward J.R."/>
            <person name="Volckaert G."/>
            <person name="Aert R."/>
            <person name="Robben J."/>
            <person name="Grymonprez B."/>
            <person name="Weltjens I."/>
            <person name="Vanstreels E."/>
            <person name="Rieger M."/>
            <person name="Schaefer M."/>
            <person name="Mueller-Auer S."/>
            <person name="Gabel C."/>
            <person name="Fuchs M."/>
            <person name="Duesterhoeft A."/>
            <person name="Fritzc C."/>
            <person name="Holzer E."/>
            <person name="Moestl D."/>
            <person name="Hilbert H."/>
            <person name="Borzym K."/>
            <person name="Langer I."/>
            <person name="Beck A."/>
            <person name="Lehrach H."/>
            <person name="Reinhardt R."/>
            <person name="Pohl T.M."/>
            <person name="Eger P."/>
            <person name="Zimmermann W."/>
            <person name="Wedler H."/>
            <person name="Wambutt R."/>
            <person name="Purnelle B."/>
            <person name="Goffeau A."/>
            <person name="Cadieu E."/>
            <person name="Dreano S."/>
            <person name="Gloux S."/>
            <person name="Lelaure V."/>
            <person name="Mottier S."/>
            <person name="Galibert F."/>
            <person name="Aves S.J."/>
            <person name="Xiang Z."/>
            <person name="Hunt C."/>
            <person name="Moore K."/>
            <person name="Hurst S.M."/>
            <person name="Lucas M."/>
            <person name="Rochet M."/>
            <person name="Gaillardin C."/>
            <person name="Tallada V.A."/>
            <person name="Garzon A."/>
            <person name="Thode G."/>
            <person name="Daga R.R."/>
            <person name="Cruzado L."/>
            <person name="Jimenez J."/>
            <person name="Sanchez M."/>
            <person name="del Rey F."/>
            <person name="Benito J."/>
            <person name="Dominguez A."/>
            <person name="Revuelta J.L."/>
            <person name="Moreno S."/>
            <person name="Armstrong J."/>
            <person name="Forsburg S.L."/>
            <person name="Cerutti L."/>
            <person name="Lowe T."/>
            <person name="McCombie W.R."/>
            <person name="Paulsen I."/>
            <person name="Potashkin J."/>
            <person name="Shpakovski G.V."/>
            <person name="Ussery D."/>
            <person name="Barrell B.G."/>
            <person name="Nurse P."/>
        </authorList>
    </citation>
    <scope>NUCLEOTIDE SEQUENCE [LARGE SCALE GENOMIC DNA]</scope>
    <source>
        <strain>972 / ATCC 24843</strain>
    </source>
</reference>
<reference key="2">
    <citation type="journal article" date="2006" name="Nat. Biotechnol.">
        <title>ORFeome cloning and global analysis of protein localization in the fission yeast Schizosaccharomyces pombe.</title>
        <authorList>
            <person name="Matsuyama A."/>
            <person name="Arai R."/>
            <person name="Yashiroda Y."/>
            <person name="Shirai A."/>
            <person name="Kamata A."/>
            <person name="Sekido S."/>
            <person name="Kobayashi Y."/>
            <person name="Hashimoto A."/>
            <person name="Hamamoto M."/>
            <person name="Hiraoka Y."/>
            <person name="Horinouchi S."/>
            <person name="Yoshida M."/>
        </authorList>
    </citation>
    <scope>SUBCELLULAR LOCATION [LARGE SCALE ANALYSIS]</scope>
</reference>
<reference key="3">
    <citation type="journal article" date="2008" name="J. Proteome Res.">
        <title>Phosphoproteome analysis of fission yeast.</title>
        <authorList>
            <person name="Wilson-Grady J.T."/>
            <person name="Villen J."/>
            <person name="Gygi S.P."/>
        </authorList>
    </citation>
    <scope>PHOSPHORYLATION [LARGE SCALE ANALYSIS] AT SER-85</scope>
    <scope>IDENTIFICATION BY MASS SPECTROMETRY</scope>
</reference>